<sequence>MASTATNTDFFKTLLSPFSNGNAAQRSSRQNIVWLNRKQSGNNNRSLRVNGLFGGGKKDNKEDGQSKAGILGNMQNLYETVKKAQMVVQVEAVRVQKELAVAEFDGYCQGELVKVTLSGNQQPIRTDITDAAMELGSEKLSLLVTEAYKDAHSKSVLAMKERMSDLAQSLGMPPGLDGLK</sequence>
<name>EBFC1_ARATH</name>
<dbReference type="EMBL" id="AY327123">
    <property type="protein sequence ID" value="AAP89016.1"/>
    <property type="molecule type" value="mRNA"/>
</dbReference>
<dbReference type="EMBL" id="AL161577">
    <property type="protein sequence ID" value="CAB79780.1"/>
    <property type="molecule type" value="Genomic_DNA"/>
</dbReference>
<dbReference type="EMBL" id="CP002687">
    <property type="protein sequence ID" value="AEE85787.1"/>
    <property type="molecule type" value="Genomic_DNA"/>
</dbReference>
<dbReference type="EMBL" id="AY074869">
    <property type="protein sequence ID" value="AAL75890.1"/>
    <property type="molecule type" value="mRNA"/>
</dbReference>
<dbReference type="EMBL" id="BT020301">
    <property type="protein sequence ID" value="AAV84522.1"/>
    <property type="molecule type" value="mRNA"/>
</dbReference>
<dbReference type="EMBL" id="BT025534">
    <property type="protein sequence ID" value="ABF58952.1"/>
    <property type="molecule type" value="mRNA"/>
</dbReference>
<dbReference type="EMBL" id="AY085741">
    <property type="protein sequence ID" value="AAM62959.1"/>
    <property type="molecule type" value="mRNA"/>
</dbReference>
<dbReference type="PIR" id="C85358">
    <property type="entry name" value="C85358"/>
</dbReference>
<dbReference type="RefSeq" id="NP_194791.1">
    <property type="nucleotide sequence ID" value="NM_119208.2"/>
</dbReference>
<dbReference type="SMR" id="Q9M098"/>
<dbReference type="FunCoup" id="Q9M098">
    <property type="interactions" value="674"/>
</dbReference>
<dbReference type="STRING" id="3702.Q9M098"/>
<dbReference type="iPTMnet" id="Q9M098"/>
<dbReference type="PaxDb" id="3702-AT4G30620.1"/>
<dbReference type="ProteomicsDB" id="221961"/>
<dbReference type="EnsemblPlants" id="AT4G30620.1">
    <property type="protein sequence ID" value="AT4G30620.1"/>
    <property type="gene ID" value="AT4G30620"/>
</dbReference>
<dbReference type="GeneID" id="829185"/>
<dbReference type="Gramene" id="AT4G30620.1">
    <property type="protein sequence ID" value="AT4G30620.1"/>
    <property type="gene ID" value="AT4G30620"/>
</dbReference>
<dbReference type="KEGG" id="ath:AT4G30620"/>
<dbReference type="Araport" id="AT4G30620"/>
<dbReference type="TAIR" id="AT4G30620">
    <property type="gene designation" value="STCL"/>
</dbReference>
<dbReference type="eggNOG" id="KOG0017">
    <property type="taxonomic scope" value="Eukaryota"/>
</dbReference>
<dbReference type="HOGENOM" id="CLU_091861_0_0_1"/>
<dbReference type="InParanoid" id="Q9M098"/>
<dbReference type="OMA" id="DRKNCAF"/>
<dbReference type="OrthoDB" id="2020094at2759"/>
<dbReference type="PhylomeDB" id="Q9M098"/>
<dbReference type="PRO" id="PR:Q9M098"/>
<dbReference type="Proteomes" id="UP000006548">
    <property type="component" value="Chromosome 4"/>
</dbReference>
<dbReference type="ExpressionAtlas" id="Q9M098">
    <property type="expression patterns" value="baseline and differential"/>
</dbReference>
<dbReference type="GO" id="GO:0009507">
    <property type="term" value="C:chloroplast"/>
    <property type="evidence" value="ECO:0007005"/>
    <property type="project" value="TAIR"/>
</dbReference>
<dbReference type="GO" id="GO:0009941">
    <property type="term" value="C:chloroplast envelope"/>
    <property type="evidence" value="ECO:0007005"/>
    <property type="project" value="TAIR"/>
</dbReference>
<dbReference type="GO" id="GO:0009570">
    <property type="term" value="C:chloroplast stroma"/>
    <property type="evidence" value="ECO:0007005"/>
    <property type="project" value="TAIR"/>
</dbReference>
<dbReference type="GO" id="GO:0005886">
    <property type="term" value="C:plasma membrane"/>
    <property type="evidence" value="ECO:0007005"/>
    <property type="project" value="TAIR"/>
</dbReference>
<dbReference type="GO" id="GO:0003677">
    <property type="term" value="F:DNA binding"/>
    <property type="evidence" value="ECO:0007669"/>
    <property type="project" value="UniProtKB-KW"/>
</dbReference>
<dbReference type="FunFam" id="3.30.1310.10:FF:000004">
    <property type="entry name" value="Nucleoid-associated protein, chloroplastic"/>
    <property type="match status" value="1"/>
</dbReference>
<dbReference type="Gene3D" id="3.30.1310.10">
    <property type="entry name" value="Nucleoid-associated protein YbaB-like domain"/>
    <property type="match status" value="1"/>
</dbReference>
<dbReference type="InterPro" id="IPR036894">
    <property type="entry name" value="YbaB-like_sf"/>
</dbReference>
<dbReference type="InterPro" id="IPR004401">
    <property type="entry name" value="YbaB/EbfC"/>
</dbReference>
<dbReference type="PANTHER" id="PTHR33449:SF5">
    <property type="entry name" value="NUCLEOID-ASSOCIATED PROTEIN"/>
    <property type="match status" value="1"/>
</dbReference>
<dbReference type="PANTHER" id="PTHR33449">
    <property type="entry name" value="NUCLEOID-ASSOCIATED PROTEIN YBAB"/>
    <property type="match status" value="1"/>
</dbReference>
<dbReference type="Pfam" id="PF02575">
    <property type="entry name" value="YbaB_DNA_bd"/>
    <property type="match status" value="1"/>
</dbReference>
<dbReference type="SUPFAM" id="SSF82607">
    <property type="entry name" value="YbaB-like"/>
    <property type="match status" value="1"/>
</dbReference>
<proteinExistence type="evidence at protein level"/>
<gene>
    <name evidence="7" type="ordered locus">At4g30620</name>
    <name evidence="7" type="ORF">F17I23.40</name>
</gene>
<comment type="function">
    <text evidence="2">Binds to DNA and alters its conformation. May be involved in regulation of gene expression, nucleoid organization and DNA protection.</text>
</comment>
<comment type="subunit">
    <text evidence="1 5">Homodimer (By similarity). Binds to the translation initiation factors TIF3E1 (PubMed:19704582).</text>
</comment>
<comment type="subcellular location">
    <subcellularLocation>
        <location evidence="3">Plastid</location>
        <location evidence="3">Chloroplast</location>
    </subcellularLocation>
</comment>
<comment type="similarity">
    <text evidence="6">Belongs to the YbaB/EbfC family.</text>
</comment>
<accession>Q9M098</accession>
<accession>Q8LDX3</accession>
<reference key="1">
    <citation type="submission" date="2003-07" db="EMBL/GenBank/DDBJ databases">
        <title>A novel plant-specific protein interacts with both eIF3e/INT6 and COP9 signalosome subunits 7 and 8 from Arabidopsis.</title>
        <authorList>
            <person name="Paz T."/>
            <person name="Hofmann K."/>
            <person name="Levanon N."/>
            <person name="Yahalom A."/>
            <person name="Chamovitz D.A."/>
        </authorList>
    </citation>
    <scope>NUCLEOTIDE SEQUENCE [MRNA]</scope>
</reference>
<reference key="2">
    <citation type="journal article" date="1999" name="Nature">
        <title>Sequence and analysis of chromosome 4 of the plant Arabidopsis thaliana.</title>
        <authorList>
            <person name="Mayer K.F.X."/>
            <person name="Schueller C."/>
            <person name="Wambutt R."/>
            <person name="Murphy G."/>
            <person name="Volckaert G."/>
            <person name="Pohl T."/>
            <person name="Duesterhoeft A."/>
            <person name="Stiekema W."/>
            <person name="Entian K.-D."/>
            <person name="Terryn N."/>
            <person name="Harris B."/>
            <person name="Ansorge W."/>
            <person name="Brandt P."/>
            <person name="Grivell L.A."/>
            <person name="Rieger M."/>
            <person name="Weichselgartner M."/>
            <person name="de Simone V."/>
            <person name="Obermaier B."/>
            <person name="Mache R."/>
            <person name="Mueller M."/>
            <person name="Kreis M."/>
            <person name="Delseny M."/>
            <person name="Puigdomenech P."/>
            <person name="Watson M."/>
            <person name="Schmidtheini T."/>
            <person name="Reichert B."/>
            <person name="Portetelle D."/>
            <person name="Perez-Alonso M."/>
            <person name="Boutry M."/>
            <person name="Bancroft I."/>
            <person name="Vos P."/>
            <person name="Hoheisel J."/>
            <person name="Zimmermann W."/>
            <person name="Wedler H."/>
            <person name="Ridley P."/>
            <person name="Langham S.-A."/>
            <person name="McCullagh B."/>
            <person name="Bilham L."/>
            <person name="Robben J."/>
            <person name="van der Schueren J."/>
            <person name="Grymonprez B."/>
            <person name="Chuang Y.-J."/>
            <person name="Vandenbussche F."/>
            <person name="Braeken M."/>
            <person name="Weltjens I."/>
            <person name="Voet M."/>
            <person name="Bastiaens I."/>
            <person name="Aert R."/>
            <person name="Defoor E."/>
            <person name="Weitzenegger T."/>
            <person name="Bothe G."/>
            <person name="Ramsperger U."/>
            <person name="Hilbert H."/>
            <person name="Braun M."/>
            <person name="Holzer E."/>
            <person name="Brandt A."/>
            <person name="Peters S."/>
            <person name="van Staveren M."/>
            <person name="Dirkse W."/>
            <person name="Mooijman P."/>
            <person name="Klein Lankhorst R."/>
            <person name="Rose M."/>
            <person name="Hauf J."/>
            <person name="Koetter P."/>
            <person name="Berneiser S."/>
            <person name="Hempel S."/>
            <person name="Feldpausch M."/>
            <person name="Lamberth S."/>
            <person name="Van den Daele H."/>
            <person name="De Keyser A."/>
            <person name="Buysshaert C."/>
            <person name="Gielen J."/>
            <person name="Villarroel R."/>
            <person name="De Clercq R."/>
            <person name="van Montagu M."/>
            <person name="Rogers J."/>
            <person name="Cronin A."/>
            <person name="Quail M.A."/>
            <person name="Bray-Allen S."/>
            <person name="Clark L."/>
            <person name="Doggett J."/>
            <person name="Hall S."/>
            <person name="Kay M."/>
            <person name="Lennard N."/>
            <person name="McLay K."/>
            <person name="Mayes R."/>
            <person name="Pettett A."/>
            <person name="Rajandream M.A."/>
            <person name="Lyne M."/>
            <person name="Benes V."/>
            <person name="Rechmann S."/>
            <person name="Borkova D."/>
            <person name="Bloecker H."/>
            <person name="Scharfe M."/>
            <person name="Grimm M."/>
            <person name="Loehnert T.-H."/>
            <person name="Dose S."/>
            <person name="de Haan M."/>
            <person name="Maarse A.C."/>
            <person name="Schaefer M."/>
            <person name="Mueller-Auer S."/>
            <person name="Gabel C."/>
            <person name="Fuchs M."/>
            <person name="Fartmann B."/>
            <person name="Granderath K."/>
            <person name="Dauner D."/>
            <person name="Herzl A."/>
            <person name="Neumann S."/>
            <person name="Argiriou A."/>
            <person name="Vitale D."/>
            <person name="Liguori R."/>
            <person name="Piravandi E."/>
            <person name="Massenet O."/>
            <person name="Quigley F."/>
            <person name="Clabauld G."/>
            <person name="Muendlein A."/>
            <person name="Felber R."/>
            <person name="Schnabl S."/>
            <person name="Hiller R."/>
            <person name="Schmidt W."/>
            <person name="Lecharny A."/>
            <person name="Aubourg S."/>
            <person name="Chefdor F."/>
            <person name="Cooke R."/>
            <person name="Berger C."/>
            <person name="Monfort A."/>
            <person name="Casacuberta E."/>
            <person name="Gibbons T."/>
            <person name="Weber N."/>
            <person name="Vandenbol M."/>
            <person name="Bargues M."/>
            <person name="Terol J."/>
            <person name="Torres A."/>
            <person name="Perez-Perez A."/>
            <person name="Purnelle B."/>
            <person name="Bent E."/>
            <person name="Johnson S."/>
            <person name="Tacon D."/>
            <person name="Jesse T."/>
            <person name="Heijnen L."/>
            <person name="Schwarz S."/>
            <person name="Scholler P."/>
            <person name="Heber S."/>
            <person name="Francs P."/>
            <person name="Bielke C."/>
            <person name="Frishman D."/>
            <person name="Haase D."/>
            <person name="Lemcke K."/>
            <person name="Mewes H.-W."/>
            <person name="Stocker S."/>
            <person name="Zaccaria P."/>
            <person name="Bevan M."/>
            <person name="Wilson R.K."/>
            <person name="de la Bastide M."/>
            <person name="Habermann K."/>
            <person name="Parnell L."/>
            <person name="Dedhia N."/>
            <person name="Gnoj L."/>
            <person name="Schutz K."/>
            <person name="Huang E."/>
            <person name="Spiegel L."/>
            <person name="Sekhon M."/>
            <person name="Murray J."/>
            <person name="Sheet P."/>
            <person name="Cordes M."/>
            <person name="Abu-Threideh J."/>
            <person name="Stoneking T."/>
            <person name="Kalicki J."/>
            <person name="Graves T."/>
            <person name="Harmon G."/>
            <person name="Edwards J."/>
            <person name="Latreille P."/>
            <person name="Courtney L."/>
            <person name="Cloud J."/>
            <person name="Abbott A."/>
            <person name="Scott K."/>
            <person name="Johnson D."/>
            <person name="Minx P."/>
            <person name="Bentley D."/>
            <person name="Fulton B."/>
            <person name="Miller N."/>
            <person name="Greco T."/>
            <person name="Kemp K."/>
            <person name="Kramer J."/>
            <person name="Fulton L."/>
            <person name="Mardis E."/>
            <person name="Dante M."/>
            <person name="Pepin K."/>
            <person name="Hillier L.W."/>
            <person name="Nelson J."/>
            <person name="Spieth J."/>
            <person name="Ryan E."/>
            <person name="Andrews S."/>
            <person name="Geisel C."/>
            <person name="Layman D."/>
            <person name="Du H."/>
            <person name="Ali J."/>
            <person name="Berghoff A."/>
            <person name="Jones K."/>
            <person name="Drone K."/>
            <person name="Cotton M."/>
            <person name="Joshu C."/>
            <person name="Antonoiu B."/>
            <person name="Zidanic M."/>
            <person name="Strong C."/>
            <person name="Sun H."/>
            <person name="Lamar B."/>
            <person name="Yordan C."/>
            <person name="Ma P."/>
            <person name="Zhong J."/>
            <person name="Preston R."/>
            <person name="Vil D."/>
            <person name="Shekher M."/>
            <person name="Matero A."/>
            <person name="Shah R."/>
            <person name="Swaby I.K."/>
            <person name="O'Shaughnessy A."/>
            <person name="Rodriguez M."/>
            <person name="Hoffman J."/>
            <person name="Till S."/>
            <person name="Granat S."/>
            <person name="Shohdy N."/>
            <person name="Hasegawa A."/>
            <person name="Hameed A."/>
            <person name="Lodhi M."/>
            <person name="Johnson A."/>
            <person name="Chen E."/>
            <person name="Marra M.A."/>
            <person name="Martienssen R."/>
            <person name="McCombie W.R."/>
        </authorList>
    </citation>
    <scope>NUCLEOTIDE SEQUENCE [LARGE SCALE GENOMIC DNA]</scope>
    <source>
        <strain>cv. Columbia</strain>
    </source>
</reference>
<reference key="3">
    <citation type="journal article" date="2017" name="Plant J.">
        <title>Araport11: a complete reannotation of the Arabidopsis thaliana reference genome.</title>
        <authorList>
            <person name="Cheng C.Y."/>
            <person name="Krishnakumar V."/>
            <person name="Chan A.P."/>
            <person name="Thibaud-Nissen F."/>
            <person name="Schobel S."/>
            <person name="Town C.D."/>
        </authorList>
    </citation>
    <scope>GENOME REANNOTATION</scope>
    <source>
        <strain>cv. Columbia</strain>
    </source>
</reference>
<reference key="4">
    <citation type="journal article" date="2003" name="Science">
        <title>Empirical analysis of transcriptional activity in the Arabidopsis genome.</title>
        <authorList>
            <person name="Yamada K."/>
            <person name="Lim J."/>
            <person name="Dale J.M."/>
            <person name="Chen H."/>
            <person name="Shinn P."/>
            <person name="Palm C.J."/>
            <person name="Southwick A.M."/>
            <person name="Wu H.C."/>
            <person name="Kim C.J."/>
            <person name="Nguyen M."/>
            <person name="Pham P.K."/>
            <person name="Cheuk R.F."/>
            <person name="Karlin-Newmann G."/>
            <person name="Liu S.X."/>
            <person name="Lam B."/>
            <person name="Sakano H."/>
            <person name="Wu T."/>
            <person name="Yu G."/>
            <person name="Miranda M."/>
            <person name="Quach H.L."/>
            <person name="Tripp M."/>
            <person name="Chang C.H."/>
            <person name="Lee J.M."/>
            <person name="Toriumi M.J."/>
            <person name="Chan M.M."/>
            <person name="Tang C.C."/>
            <person name="Onodera C.S."/>
            <person name="Deng J.M."/>
            <person name="Akiyama K."/>
            <person name="Ansari Y."/>
            <person name="Arakawa T."/>
            <person name="Banh J."/>
            <person name="Banno F."/>
            <person name="Bowser L."/>
            <person name="Brooks S.Y."/>
            <person name="Carninci P."/>
            <person name="Chao Q."/>
            <person name="Choy N."/>
            <person name="Enju A."/>
            <person name="Goldsmith A.D."/>
            <person name="Gurjal M."/>
            <person name="Hansen N.F."/>
            <person name="Hayashizaki Y."/>
            <person name="Johnson-Hopson C."/>
            <person name="Hsuan V.W."/>
            <person name="Iida K."/>
            <person name="Karnes M."/>
            <person name="Khan S."/>
            <person name="Koesema E."/>
            <person name="Ishida J."/>
            <person name="Jiang P.X."/>
            <person name="Jones T."/>
            <person name="Kawai J."/>
            <person name="Kamiya A."/>
            <person name="Meyers C."/>
            <person name="Nakajima M."/>
            <person name="Narusaka M."/>
            <person name="Seki M."/>
            <person name="Sakurai T."/>
            <person name="Satou M."/>
            <person name="Tamse R."/>
            <person name="Vaysberg M."/>
            <person name="Wallender E.K."/>
            <person name="Wong C."/>
            <person name="Yamamura Y."/>
            <person name="Yuan S."/>
            <person name="Shinozaki K."/>
            <person name="Davis R.W."/>
            <person name="Theologis A."/>
            <person name="Ecker J.R."/>
        </authorList>
    </citation>
    <scope>NUCLEOTIDE SEQUENCE [LARGE SCALE MRNA]</scope>
    <source>
        <strain>cv. Columbia</strain>
    </source>
</reference>
<reference key="5">
    <citation type="submission" date="2006-05" db="EMBL/GenBank/DDBJ databases">
        <title>Arabidopsis ORF clones.</title>
        <authorList>
            <person name="Kim C.J."/>
            <person name="Chen H."/>
            <person name="Quinitio C."/>
            <person name="Shinn P."/>
            <person name="Ecker J.R."/>
        </authorList>
    </citation>
    <scope>NUCLEOTIDE SEQUENCE [LARGE SCALE MRNA]</scope>
    <source>
        <strain>cv. Columbia</strain>
    </source>
</reference>
<reference key="6">
    <citation type="submission" date="2002-03" db="EMBL/GenBank/DDBJ databases">
        <title>Full-length cDNA from Arabidopsis thaliana.</title>
        <authorList>
            <person name="Brover V.V."/>
            <person name="Troukhan M.E."/>
            <person name="Alexandrov N.A."/>
            <person name="Lu Y.-P."/>
            <person name="Flavell R.B."/>
            <person name="Feldmann K.A."/>
        </authorList>
    </citation>
    <scope>NUCLEOTIDE SEQUENCE [LARGE SCALE MRNA]</scope>
</reference>
<reference key="7">
    <citation type="journal article" date="2008" name="Plant Signal. Behav.">
        <title>Arabidopsis eIF3e interacts with subunits of the ribosome, Cop9 signalosome and proteasome.</title>
        <authorList>
            <person name="Paz-Aviram T."/>
            <person name="Yahalom A."/>
            <person name="Chamovitz D.A."/>
        </authorList>
    </citation>
    <scope>INTERACTION WITH TIF3E1</scope>
</reference>
<organism>
    <name type="scientific">Arabidopsis thaliana</name>
    <name type="common">Mouse-ear cress</name>
    <dbReference type="NCBI Taxonomy" id="3702"/>
    <lineage>
        <taxon>Eukaryota</taxon>
        <taxon>Viridiplantae</taxon>
        <taxon>Streptophyta</taxon>
        <taxon>Embryophyta</taxon>
        <taxon>Tracheophyta</taxon>
        <taxon>Spermatophyta</taxon>
        <taxon>Magnoliopsida</taxon>
        <taxon>eudicotyledons</taxon>
        <taxon>Gunneridae</taxon>
        <taxon>Pentapetalae</taxon>
        <taxon>rosids</taxon>
        <taxon>malvids</taxon>
        <taxon>Brassicales</taxon>
        <taxon>Brassicaceae</taxon>
        <taxon>Camelineae</taxon>
        <taxon>Arabidopsis</taxon>
    </lineage>
</organism>
<evidence type="ECO:0000250" key="1">
    <source>
        <dbReference type="UniProtKB" id="P0A8B5"/>
    </source>
</evidence>
<evidence type="ECO:0000250" key="2">
    <source>
        <dbReference type="UniProtKB" id="Q9RXV7"/>
    </source>
</evidence>
<evidence type="ECO:0000255" key="3"/>
<evidence type="ECO:0000256" key="4">
    <source>
        <dbReference type="SAM" id="MobiDB-lite"/>
    </source>
</evidence>
<evidence type="ECO:0000269" key="5">
    <source>
    </source>
</evidence>
<evidence type="ECO:0000305" key="6"/>
<evidence type="ECO:0000312" key="7">
    <source>
        <dbReference type="EMBL" id="CAB79780.1"/>
    </source>
</evidence>
<protein>
    <recommendedName>
        <fullName>Nucleoid-associated protein At4g30620, chloroplastic</fullName>
    </recommendedName>
</protein>
<feature type="transit peptide" description="Chloroplast" evidence="3">
    <location>
        <begin position="1"/>
        <end position="48"/>
    </location>
</feature>
<feature type="chain" id="PRO_0000434789" description="Nucleoid-associated protein At4g30620, chloroplastic" evidence="3">
    <location>
        <begin position="49"/>
        <end position="180"/>
    </location>
</feature>
<feature type="region of interest" description="Disordered" evidence="4">
    <location>
        <begin position="45"/>
        <end position="65"/>
    </location>
</feature>
<feature type="compositionally biased region" description="Basic and acidic residues" evidence="4">
    <location>
        <begin position="56"/>
        <end position="65"/>
    </location>
</feature>
<feature type="sequence conflict" description="In Ref. 1; AAP89016 and 6; AAM62959." evidence="6" ref="1 6">
    <original>G</original>
    <variation>V</variation>
    <location>
        <position position="51"/>
    </location>
</feature>
<keyword id="KW-0150">Chloroplast</keyword>
<keyword id="KW-0238">DNA-binding</keyword>
<keyword id="KW-0934">Plastid</keyword>
<keyword id="KW-1185">Reference proteome</keyword>
<keyword id="KW-0809">Transit peptide</keyword>